<name>NU5C_ACOCI</name>
<accession>A9LYE7</accession>
<gene>
    <name type="primary">ndhF</name>
</gene>
<protein>
    <recommendedName>
        <fullName>NAD(P)H-quinone oxidoreductase subunit 5, chloroplastic</fullName>
        <ecNumber>7.1.1.-</ecNumber>
    </recommendedName>
    <alternativeName>
        <fullName>NAD(P)H dehydrogenase subunit 5</fullName>
    </alternativeName>
    <alternativeName>
        <fullName>NADH-plastoquinone oxidoreductase subunit 5</fullName>
    </alternativeName>
</protein>
<evidence type="ECO:0000250" key="1"/>
<evidence type="ECO:0000255" key="2"/>
<evidence type="ECO:0000305" key="3"/>
<proteinExistence type="inferred from homology"/>
<keyword id="KW-0150">Chloroplast</keyword>
<keyword id="KW-0472">Membrane</keyword>
<keyword id="KW-0520">NAD</keyword>
<keyword id="KW-0521">NADP</keyword>
<keyword id="KW-0934">Plastid</keyword>
<keyword id="KW-0618">Plastoquinone</keyword>
<keyword id="KW-0874">Quinone</keyword>
<keyword id="KW-0793">Thylakoid</keyword>
<keyword id="KW-1278">Translocase</keyword>
<keyword id="KW-0812">Transmembrane</keyword>
<keyword id="KW-1133">Transmembrane helix</keyword>
<keyword id="KW-0813">Transport</keyword>
<sequence length="739" mass="83550">MEHTYQYAWIIPFLPFPVTISIGLGLLLVPTATKNLRRIWAFFSVLLLSIAMVFSADLAIQQINGSFIYQYSWSWTINNTFSLEFGYLIDPLTSIMLILITTVGIMVLIYSDNYMSHDQGYLRFFAYMSFFNTSMLGLVTSSNLIQIYIFWELVGMCSYLLIGFWFTRPTAANACQKAFVTNRVGDFGLLLGILGLYWITGSFEFRDLFEILKNLIHNNEVNSLFAALCASLLFVGAVAKSAQFPLHVWLPDAMEGPTPISALIHAATMVAAGIFLVARLLPLFTVIPYIMNFISLIGIITVLLGATLALAQRDIKRSLAYSTMSQLGYIMLAPGIGSYRAALFHLITHAYSKALLFLGSGSIIHSMEPIVGYSPEKSQNMILMGGLRRYVPITKTTFFLGTLSLCGMPPLACFWSKDEILNDTWLYSPIFAIIAWSTAGLTAFYMFRVYLLTFDGHLQVHFQNFSSTKNSSFYSISIWGKEVPKPLNVNLFLSTMNTNEKMSFFSKNTYQIDRNGKNRIRYFSTQFGNKYTSMYPHESDNTMLFPMLVLVLFTLFIGFIGIPFDQGVIDLDILSKWLTPSINLLHSNSGDSFDWYEFVTNAIYSVTISFLGIFLAYIFYGSVYSSFQNLDLINSFVRIDSKRILSDRIINGIYNWSYNRGYIDVFYGKVLSNTIRGLAELIHFFDRRVIDGITNGVGVVSFFVGEGIKSVGGGRISSYIFLYAFSVSICLIIYYFFSF</sequence>
<geneLocation type="chloroplast"/>
<feature type="chain" id="PRO_0000360904" description="NAD(P)H-quinone oxidoreductase subunit 5, chloroplastic">
    <location>
        <begin position="1"/>
        <end position="739"/>
    </location>
</feature>
<feature type="transmembrane region" description="Helical" evidence="2">
    <location>
        <begin position="9"/>
        <end position="29"/>
    </location>
</feature>
<feature type="transmembrane region" description="Helical" evidence="2">
    <location>
        <begin position="39"/>
        <end position="59"/>
    </location>
</feature>
<feature type="transmembrane region" description="Helical" evidence="2">
    <location>
        <begin position="89"/>
        <end position="109"/>
    </location>
</feature>
<feature type="transmembrane region" description="Helical" evidence="2">
    <location>
        <begin position="125"/>
        <end position="145"/>
    </location>
</feature>
<feature type="transmembrane region" description="Helical" evidence="2">
    <location>
        <begin position="147"/>
        <end position="167"/>
    </location>
</feature>
<feature type="transmembrane region" description="Helical" evidence="2">
    <location>
        <begin position="185"/>
        <end position="205"/>
    </location>
</feature>
<feature type="transmembrane region" description="Helical" evidence="2">
    <location>
        <begin position="224"/>
        <end position="244"/>
    </location>
</feature>
<feature type="transmembrane region" description="Helical" evidence="2">
    <location>
        <begin position="258"/>
        <end position="278"/>
    </location>
</feature>
<feature type="transmembrane region" description="Helical" evidence="2">
    <location>
        <begin position="280"/>
        <end position="300"/>
    </location>
</feature>
<feature type="transmembrane region" description="Helical" evidence="2">
    <location>
        <begin position="327"/>
        <end position="347"/>
    </location>
</feature>
<feature type="transmembrane region" description="Helical" evidence="2">
    <location>
        <begin position="354"/>
        <end position="374"/>
    </location>
</feature>
<feature type="transmembrane region" description="Helical" evidence="2">
    <location>
        <begin position="396"/>
        <end position="416"/>
    </location>
</feature>
<feature type="transmembrane region" description="Helical" evidence="2">
    <location>
        <begin position="425"/>
        <end position="445"/>
    </location>
</feature>
<feature type="transmembrane region" description="Helical" evidence="2">
    <location>
        <begin position="544"/>
        <end position="564"/>
    </location>
</feature>
<feature type="transmembrane region" description="Helical" evidence="2">
    <location>
        <begin position="603"/>
        <end position="623"/>
    </location>
</feature>
<feature type="transmembrane region" description="Helical" evidence="2">
    <location>
        <begin position="719"/>
        <end position="739"/>
    </location>
</feature>
<comment type="function">
    <text evidence="1">NDH shuttles electrons from NAD(P)H:plastoquinone, via FMN and iron-sulfur (Fe-S) centers, to quinones in the photosynthetic chain and possibly in a chloroplast respiratory chain. The immediate electron acceptor for the enzyme in this species is believed to be plastoquinone. Couples the redox reaction to proton translocation, and thus conserves the redox energy in a proton gradient (By similarity).</text>
</comment>
<comment type="catalytic activity">
    <reaction>
        <text>a plastoquinone + NADH + (n+1) H(+)(in) = a plastoquinol + NAD(+) + n H(+)(out)</text>
        <dbReference type="Rhea" id="RHEA:42608"/>
        <dbReference type="Rhea" id="RHEA-COMP:9561"/>
        <dbReference type="Rhea" id="RHEA-COMP:9562"/>
        <dbReference type="ChEBI" id="CHEBI:15378"/>
        <dbReference type="ChEBI" id="CHEBI:17757"/>
        <dbReference type="ChEBI" id="CHEBI:57540"/>
        <dbReference type="ChEBI" id="CHEBI:57945"/>
        <dbReference type="ChEBI" id="CHEBI:62192"/>
    </reaction>
</comment>
<comment type="catalytic activity">
    <reaction>
        <text>a plastoquinone + NADPH + (n+1) H(+)(in) = a plastoquinol + NADP(+) + n H(+)(out)</text>
        <dbReference type="Rhea" id="RHEA:42612"/>
        <dbReference type="Rhea" id="RHEA-COMP:9561"/>
        <dbReference type="Rhea" id="RHEA-COMP:9562"/>
        <dbReference type="ChEBI" id="CHEBI:15378"/>
        <dbReference type="ChEBI" id="CHEBI:17757"/>
        <dbReference type="ChEBI" id="CHEBI:57783"/>
        <dbReference type="ChEBI" id="CHEBI:58349"/>
        <dbReference type="ChEBI" id="CHEBI:62192"/>
    </reaction>
</comment>
<comment type="subunit">
    <text evidence="1">NDH is composed of at least 16 different subunits, 5 of which are encoded in the nucleus.</text>
</comment>
<comment type="subcellular location">
    <subcellularLocation>
        <location evidence="1">Plastid</location>
        <location evidence="1">Chloroplast thylakoid membrane</location>
        <topology evidence="1">Multi-pass membrane protein</topology>
    </subcellularLocation>
</comment>
<comment type="similarity">
    <text evidence="3">Belongs to the complex I subunit 5 family.</text>
</comment>
<dbReference type="EC" id="7.1.1.-"/>
<dbReference type="EMBL" id="EU273602">
    <property type="protein sequence ID" value="ABX38790.1"/>
    <property type="molecule type" value="Genomic_DNA"/>
</dbReference>
<dbReference type="RefSeq" id="YP_001586228.1">
    <property type="nucleotide sequence ID" value="NC_010093.1"/>
</dbReference>
<dbReference type="SMR" id="A9LYE7"/>
<dbReference type="GeneID" id="5777731"/>
<dbReference type="GO" id="GO:0009535">
    <property type="term" value="C:chloroplast thylakoid membrane"/>
    <property type="evidence" value="ECO:0007669"/>
    <property type="project" value="UniProtKB-SubCell"/>
</dbReference>
<dbReference type="GO" id="GO:0008137">
    <property type="term" value="F:NADH dehydrogenase (ubiquinone) activity"/>
    <property type="evidence" value="ECO:0007669"/>
    <property type="project" value="InterPro"/>
</dbReference>
<dbReference type="GO" id="GO:0048038">
    <property type="term" value="F:quinone binding"/>
    <property type="evidence" value="ECO:0007669"/>
    <property type="project" value="UniProtKB-KW"/>
</dbReference>
<dbReference type="GO" id="GO:0042773">
    <property type="term" value="P:ATP synthesis coupled electron transport"/>
    <property type="evidence" value="ECO:0007669"/>
    <property type="project" value="InterPro"/>
</dbReference>
<dbReference type="GO" id="GO:0015990">
    <property type="term" value="P:electron transport coupled proton transport"/>
    <property type="evidence" value="ECO:0007669"/>
    <property type="project" value="TreeGrafter"/>
</dbReference>
<dbReference type="Gene3D" id="1.20.5.2700">
    <property type="match status" value="1"/>
</dbReference>
<dbReference type="InterPro" id="IPR002128">
    <property type="entry name" value="NADH_UbQ_OxRdtase_chlpt_su5_C"/>
</dbReference>
<dbReference type="InterPro" id="IPR018393">
    <property type="entry name" value="NADHpl_OxRdtase_5_subgr"/>
</dbReference>
<dbReference type="InterPro" id="IPR001750">
    <property type="entry name" value="ND/Mrp_TM"/>
</dbReference>
<dbReference type="InterPro" id="IPR003945">
    <property type="entry name" value="NU5C-like"/>
</dbReference>
<dbReference type="InterPro" id="IPR001516">
    <property type="entry name" value="Proton_antipo_N"/>
</dbReference>
<dbReference type="NCBIfam" id="TIGR01974">
    <property type="entry name" value="NDH_I_L"/>
    <property type="match status" value="1"/>
</dbReference>
<dbReference type="NCBIfam" id="NF005141">
    <property type="entry name" value="PRK06590.1"/>
    <property type="match status" value="1"/>
</dbReference>
<dbReference type="PANTHER" id="PTHR42829">
    <property type="entry name" value="NADH-UBIQUINONE OXIDOREDUCTASE CHAIN 5"/>
    <property type="match status" value="1"/>
</dbReference>
<dbReference type="PANTHER" id="PTHR42829:SF2">
    <property type="entry name" value="NADH-UBIQUINONE OXIDOREDUCTASE CHAIN 5"/>
    <property type="match status" value="1"/>
</dbReference>
<dbReference type="Pfam" id="PF01010">
    <property type="entry name" value="Proton_antipo_C"/>
    <property type="match status" value="1"/>
</dbReference>
<dbReference type="Pfam" id="PF00361">
    <property type="entry name" value="Proton_antipo_M"/>
    <property type="match status" value="1"/>
</dbReference>
<dbReference type="Pfam" id="PF00662">
    <property type="entry name" value="Proton_antipo_N"/>
    <property type="match status" value="1"/>
</dbReference>
<dbReference type="PRINTS" id="PR01434">
    <property type="entry name" value="NADHDHGNASE5"/>
</dbReference>
<dbReference type="PRINTS" id="PR01435">
    <property type="entry name" value="NPOXDRDTASE5"/>
</dbReference>
<reference key="1">
    <citation type="submission" date="2007-11" db="EMBL/GenBank/DDBJ databases">
        <title>The complete chloroplast genome of Acorus americanus.</title>
        <authorList>
            <person name="Peery R.M."/>
            <person name="Chumley T.W."/>
            <person name="Kuehl J.V."/>
            <person name="Boore J.L."/>
            <person name="Raubeson L.A."/>
        </authorList>
    </citation>
    <scope>NUCLEOTIDE SEQUENCE [LARGE SCALE GENOMIC DNA]</scope>
</reference>
<organism>
    <name type="scientific">Acorus calamus var. americanus</name>
    <name type="common">American sweet flag</name>
    <name type="synonym">Acorus americanus</name>
    <dbReference type="NCBI Taxonomy" id="263995"/>
    <lineage>
        <taxon>Eukaryota</taxon>
        <taxon>Viridiplantae</taxon>
        <taxon>Streptophyta</taxon>
        <taxon>Embryophyta</taxon>
        <taxon>Tracheophyta</taxon>
        <taxon>Spermatophyta</taxon>
        <taxon>Magnoliopsida</taxon>
        <taxon>Liliopsida</taxon>
        <taxon>Acoraceae</taxon>
        <taxon>Acorus</taxon>
    </lineage>
</organism>